<proteinExistence type="inferred from homology"/>
<reference key="1">
    <citation type="journal article" date="1994" name="Curr. Microbiol.">
        <title>Cloning and sequencing of the replication origin (oriC) of the Spiroplasma citri chromosome and construction of autonomously replicating artificial plasmids.</title>
        <authorList>
            <person name="Ye F."/>
            <person name="Renaudin J."/>
            <person name="Bove J.M."/>
            <person name="Laigret F."/>
        </authorList>
    </citation>
    <scope>NUCLEOTIDE SEQUENCE [GENOMIC DNA]</scope>
    <source>
        <strain>R8A2HP</strain>
    </source>
</reference>
<gene>
    <name evidence="1" type="primary">gyrB</name>
</gene>
<comment type="function">
    <text evidence="1">A type II topoisomerase that negatively supercoils closed circular double-stranded (ds) DNA in an ATP-dependent manner to modulate DNA topology and maintain chromosomes in an underwound state. Negative supercoiling favors strand separation, and DNA replication, transcription, recombination and repair, all of which involve strand separation. Also able to catalyze the interconversion of other topological isomers of dsDNA rings, including catenanes and knotted rings. Type II topoisomerases break and join 2 DNA strands simultaneously in an ATP-dependent manner.</text>
</comment>
<comment type="catalytic activity">
    <reaction evidence="1">
        <text>ATP-dependent breakage, passage and rejoining of double-stranded DNA.</text>
        <dbReference type="EC" id="5.6.2.2"/>
    </reaction>
</comment>
<comment type="cofactor">
    <cofactor evidence="1">
        <name>Mg(2+)</name>
        <dbReference type="ChEBI" id="CHEBI:18420"/>
    </cofactor>
    <cofactor evidence="1">
        <name>Mn(2+)</name>
        <dbReference type="ChEBI" id="CHEBI:29035"/>
    </cofactor>
    <cofactor evidence="1">
        <name>Ca(2+)</name>
        <dbReference type="ChEBI" id="CHEBI:29108"/>
    </cofactor>
    <text evidence="1">Binds two Mg(2+) per subunit. The magnesium ions form salt bridges with both the protein and the DNA. Can also accept other divalent metal cations, such as Mn(2+) or Ca(2+).</text>
</comment>
<comment type="subunit">
    <text evidence="1">Heterotetramer, composed of two GyrA and two GyrB chains. In the heterotetramer, GyrA contains the active site tyrosine that forms a transient covalent intermediate with DNA, while GyrB binds cofactors and catalyzes ATP hydrolysis.</text>
</comment>
<comment type="subcellular location">
    <subcellularLocation>
        <location evidence="1">Cytoplasm</location>
    </subcellularLocation>
</comment>
<comment type="miscellaneous">
    <text evidence="1">Few gyrases are as efficient as E.coli at forming negative supercoils. Not all organisms have 2 type II topoisomerases; in organisms with a single type II topoisomerase this enzyme also has to decatenate newly replicated chromosomes.</text>
</comment>
<comment type="similarity">
    <text evidence="1">Belongs to the type II topoisomerase GyrB family.</text>
</comment>
<feature type="chain" id="PRO_0000145336" description="DNA gyrase subunit B">
    <location>
        <begin position="1"/>
        <end position="640"/>
    </location>
</feature>
<feature type="domain" description="Toprim" evidence="1">
    <location>
        <begin position="423"/>
        <end position="537"/>
    </location>
</feature>
<feature type="binding site" evidence="1">
    <location>
        <position position="429"/>
    </location>
    <ligand>
        <name>Mg(2+)</name>
        <dbReference type="ChEBI" id="CHEBI:18420"/>
        <label>1</label>
        <note>catalytic</note>
    </ligand>
</feature>
<feature type="binding site" evidence="1">
    <location>
        <position position="502"/>
    </location>
    <ligand>
        <name>Mg(2+)</name>
        <dbReference type="ChEBI" id="CHEBI:18420"/>
        <label>1</label>
        <note>catalytic</note>
    </ligand>
</feature>
<feature type="binding site" evidence="1">
    <location>
        <position position="502"/>
    </location>
    <ligand>
        <name>Mg(2+)</name>
        <dbReference type="ChEBI" id="CHEBI:18420"/>
        <label>2</label>
    </ligand>
</feature>
<feature type="binding site" evidence="1">
    <location>
        <position position="504"/>
    </location>
    <ligand>
        <name>Mg(2+)</name>
        <dbReference type="ChEBI" id="CHEBI:18420"/>
        <label>2</label>
    </ligand>
</feature>
<feature type="site" description="Interaction with DNA" evidence="1">
    <location>
        <position position="454"/>
    </location>
</feature>
<feature type="site" description="Interaction with DNA" evidence="1">
    <location>
        <position position="457"/>
    </location>
</feature>
<evidence type="ECO:0000255" key="1">
    <source>
        <dbReference type="HAMAP-Rule" id="MF_01898"/>
    </source>
</evidence>
<name>GYRB_SPICI</name>
<dbReference type="EC" id="5.6.2.2" evidence="1"/>
<dbReference type="EMBL" id="Z19108">
    <property type="protein sequence ID" value="CAA79523.1"/>
    <property type="molecule type" value="Genomic_DNA"/>
</dbReference>
<dbReference type="PIR" id="S35734">
    <property type="entry name" value="S35734"/>
</dbReference>
<dbReference type="SMR" id="P34031"/>
<dbReference type="STRING" id="2133.SCITRI_003"/>
<dbReference type="GO" id="GO:0005694">
    <property type="term" value="C:chromosome"/>
    <property type="evidence" value="ECO:0007669"/>
    <property type="project" value="InterPro"/>
</dbReference>
<dbReference type="GO" id="GO:0005737">
    <property type="term" value="C:cytoplasm"/>
    <property type="evidence" value="ECO:0007669"/>
    <property type="project" value="UniProtKB-SubCell"/>
</dbReference>
<dbReference type="GO" id="GO:0005524">
    <property type="term" value="F:ATP binding"/>
    <property type="evidence" value="ECO:0007669"/>
    <property type="project" value="UniProtKB-UniRule"/>
</dbReference>
<dbReference type="GO" id="GO:0003677">
    <property type="term" value="F:DNA binding"/>
    <property type="evidence" value="ECO:0007669"/>
    <property type="project" value="UniProtKB-KW"/>
</dbReference>
<dbReference type="GO" id="GO:0034335">
    <property type="term" value="F:DNA negative supercoiling activity"/>
    <property type="evidence" value="ECO:0007669"/>
    <property type="project" value="UniProtKB-ARBA"/>
</dbReference>
<dbReference type="GO" id="GO:0046872">
    <property type="term" value="F:metal ion binding"/>
    <property type="evidence" value="ECO:0007669"/>
    <property type="project" value="UniProtKB-KW"/>
</dbReference>
<dbReference type="GO" id="GO:0006265">
    <property type="term" value="P:DNA topological change"/>
    <property type="evidence" value="ECO:0007669"/>
    <property type="project" value="UniProtKB-UniRule"/>
</dbReference>
<dbReference type="GO" id="GO:0006261">
    <property type="term" value="P:DNA-templated DNA replication"/>
    <property type="evidence" value="ECO:0007669"/>
    <property type="project" value="UniProtKB-UniRule"/>
</dbReference>
<dbReference type="CDD" id="cd16928">
    <property type="entry name" value="HATPase_GyrB-like"/>
    <property type="match status" value="1"/>
</dbReference>
<dbReference type="CDD" id="cd00822">
    <property type="entry name" value="TopoII_Trans_DNA_gyrase"/>
    <property type="match status" value="1"/>
</dbReference>
<dbReference type="CDD" id="cd03366">
    <property type="entry name" value="TOPRIM_TopoIIA_GyrB"/>
    <property type="match status" value="1"/>
</dbReference>
<dbReference type="FunFam" id="3.30.565.10:FF:000002">
    <property type="entry name" value="DNA gyrase subunit B"/>
    <property type="match status" value="1"/>
</dbReference>
<dbReference type="FunFam" id="3.40.50.670:FF:000002">
    <property type="entry name" value="DNA gyrase subunit B"/>
    <property type="match status" value="1"/>
</dbReference>
<dbReference type="Gene3D" id="3.30.230.10">
    <property type="match status" value="1"/>
</dbReference>
<dbReference type="Gene3D" id="3.40.50.670">
    <property type="match status" value="1"/>
</dbReference>
<dbReference type="Gene3D" id="3.30.565.10">
    <property type="entry name" value="Histidine kinase-like ATPase, C-terminal domain"/>
    <property type="match status" value="1"/>
</dbReference>
<dbReference type="HAMAP" id="MF_01898">
    <property type="entry name" value="GyrB"/>
    <property type="match status" value="1"/>
</dbReference>
<dbReference type="InterPro" id="IPR002288">
    <property type="entry name" value="DNA_gyrase_B_C"/>
</dbReference>
<dbReference type="InterPro" id="IPR011557">
    <property type="entry name" value="GyrB"/>
</dbReference>
<dbReference type="InterPro" id="IPR036890">
    <property type="entry name" value="HATPase_C_sf"/>
</dbReference>
<dbReference type="InterPro" id="IPR020568">
    <property type="entry name" value="Ribosomal_Su5_D2-typ_SF"/>
</dbReference>
<dbReference type="InterPro" id="IPR014721">
    <property type="entry name" value="Ribsml_uS5_D2-typ_fold_subgr"/>
</dbReference>
<dbReference type="InterPro" id="IPR001241">
    <property type="entry name" value="Topo_IIA"/>
</dbReference>
<dbReference type="InterPro" id="IPR013760">
    <property type="entry name" value="Topo_IIA-like_dom_sf"/>
</dbReference>
<dbReference type="InterPro" id="IPR000565">
    <property type="entry name" value="Topo_IIA_B"/>
</dbReference>
<dbReference type="InterPro" id="IPR013759">
    <property type="entry name" value="Topo_IIA_B_C"/>
</dbReference>
<dbReference type="InterPro" id="IPR013506">
    <property type="entry name" value="Topo_IIA_bsu_dom2"/>
</dbReference>
<dbReference type="InterPro" id="IPR018522">
    <property type="entry name" value="TopoIIA_CS"/>
</dbReference>
<dbReference type="InterPro" id="IPR006171">
    <property type="entry name" value="TOPRIM_dom"/>
</dbReference>
<dbReference type="InterPro" id="IPR034160">
    <property type="entry name" value="TOPRIM_GyrB"/>
</dbReference>
<dbReference type="NCBIfam" id="TIGR01059">
    <property type="entry name" value="gyrB"/>
    <property type="match status" value="1"/>
</dbReference>
<dbReference type="NCBIfam" id="NF004189">
    <property type="entry name" value="PRK05644.1"/>
    <property type="match status" value="1"/>
</dbReference>
<dbReference type="NCBIfam" id="NF011501">
    <property type="entry name" value="PRK14939.1"/>
    <property type="match status" value="1"/>
</dbReference>
<dbReference type="PANTHER" id="PTHR45866:SF1">
    <property type="entry name" value="DNA GYRASE SUBUNIT B, MITOCHONDRIAL"/>
    <property type="match status" value="1"/>
</dbReference>
<dbReference type="PANTHER" id="PTHR45866">
    <property type="entry name" value="DNA GYRASE/TOPOISOMERASE SUBUNIT B"/>
    <property type="match status" value="1"/>
</dbReference>
<dbReference type="Pfam" id="PF00204">
    <property type="entry name" value="DNA_gyraseB"/>
    <property type="match status" value="1"/>
</dbReference>
<dbReference type="Pfam" id="PF00986">
    <property type="entry name" value="DNA_gyraseB_C"/>
    <property type="match status" value="1"/>
</dbReference>
<dbReference type="Pfam" id="PF02518">
    <property type="entry name" value="HATPase_c"/>
    <property type="match status" value="1"/>
</dbReference>
<dbReference type="Pfam" id="PF01751">
    <property type="entry name" value="Toprim"/>
    <property type="match status" value="1"/>
</dbReference>
<dbReference type="PRINTS" id="PR01159">
    <property type="entry name" value="DNAGYRASEB"/>
</dbReference>
<dbReference type="PRINTS" id="PR00418">
    <property type="entry name" value="TPI2FAMILY"/>
</dbReference>
<dbReference type="SMART" id="SM00387">
    <property type="entry name" value="HATPase_c"/>
    <property type="match status" value="1"/>
</dbReference>
<dbReference type="SMART" id="SM00433">
    <property type="entry name" value="TOP2c"/>
    <property type="match status" value="1"/>
</dbReference>
<dbReference type="SUPFAM" id="SSF55874">
    <property type="entry name" value="ATPase domain of HSP90 chaperone/DNA topoisomerase II/histidine kinase"/>
    <property type="match status" value="1"/>
</dbReference>
<dbReference type="SUPFAM" id="SSF54211">
    <property type="entry name" value="Ribosomal protein S5 domain 2-like"/>
    <property type="match status" value="1"/>
</dbReference>
<dbReference type="SUPFAM" id="SSF56719">
    <property type="entry name" value="Type II DNA topoisomerase"/>
    <property type="match status" value="1"/>
</dbReference>
<dbReference type="PROSITE" id="PS00177">
    <property type="entry name" value="TOPOISOMERASE_II"/>
    <property type="match status" value="1"/>
</dbReference>
<dbReference type="PROSITE" id="PS50880">
    <property type="entry name" value="TOPRIM"/>
    <property type="match status" value="1"/>
</dbReference>
<sequence length="640" mass="72763">MGDNYNSESIQILEGLEAIRKRPGMYIGATNARGLHHLVWEIVDNSIDEVLANFANKIKIILNKDESITVIDNGRGIPIEIHPKTKVSTLETVFTILHAGGKFDSNTYKISGGLHGVGASVVNALSKYLKVEVRKNNKKYVMEFHNGGQILTPIKEVGSTSETGTTVTFLPDEKIFKETTIFSFSTIQNRIKQLVFLNKGLEISLVDLREEDEEKTVLYQFNNGIKDYVLELNKTIGTPLNDVFYVEGIEDNIVVEFGLQYNDNYSENIFSFCNNINTHEGGTHEEGARLAIVREINNYFKNQINKNNKGNEDKFTWDDIKEGMTIIISIRHPEPQYEGQTNQKLLNSEVKKIVSNIVGKGLSSYLLENPEDAKKIIEKISLSLKATIVAQRAKEITRRKIVMDSFSLPGKLSDCETKDAKIAELYIVEGDSAGGSAKSGRNRKFQAILPLRGKILNVEKAKQIKIFENNEINSIITALGAGIKDNFNDKKLRYQKVIIMTDADVDGAHIRILLLTFFYRYMKDLIENGNIYIAQPPLYKVENSNQIRYVYSDNELELYKEELLKQNKNYTIQRYKGLGEMNPEQLWETTMDPERRLLLKVSVNNAFEANLICNELMGENVEPRKKFIRENAKYVKNLDV</sequence>
<protein>
    <recommendedName>
        <fullName evidence="1">DNA gyrase subunit B</fullName>
        <ecNumber evidence="1">5.6.2.2</ecNumber>
    </recommendedName>
</protein>
<keyword id="KW-0067">ATP-binding</keyword>
<keyword id="KW-0963">Cytoplasm</keyword>
<keyword id="KW-0238">DNA-binding</keyword>
<keyword id="KW-0413">Isomerase</keyword>
<keyword id="KW-0460">Magnesium</keyword>
<keyword id="KW-0479">Metal-binding</keyword>
<keyword id="KW-0547">Nucleotide-binding</keyword>
<keyword id="KW-0799">Topoisomerase</keyword>
<organism>
    <name type="scientific">Spiroplasma citri</name>
    <dbReference type="NCBI Taxonomy" id="2133"/>
    <lineage>
        <taxon>Bacteria</taxon>
        <taxon>Bacillati</taxon>
        <taxon>Mycoplasmatota</taxon>
        <taxon>Mollicutes</taxon>
        <taxon>Entomoplasmatales</taxon>
        <taxon>Spiroplasmataceae</taxon>
        <taxon>Spiroplasma</taxon>
    </lineage>
</organism>
<accession>P34031</accession>